<keyword id="KW-0025">Alternative splicing</keyword>
<keyword id="KW-0507">mRNA processing</keyword>
<keyword id="KW-0539">Nucleus</keyword>
<keyword id="KW-0597">Phosphoprotein</keyword>
<keyword id="KW-1185">Reference proteome</keyword>
<keyword id="KW-0694">RNA-binding</keyword>
<sequence length="581" mass="64959">MSAGEVERLVELSGGTGGDEEEEWLYGGPWDVHVHSDLAKDLDENEVERPEEENASANPPSGIEEEAAENGVAKPKVTETEDDSDSDSDDDEDDVHVTIGDIKTGAPQYGSYGTAPVNLNIKAGGRVYGNTGTKVKGVDLDAPGSINGVPLLEVDLDSFEDKPWRKPGADLSDYFNYGFNEDTWKAYCEKQKRIRMGLEVIPVTSTTNKITVQQGRTGNSEKEAALPSTKAEFTSPPSLFKTGLPPSRNSTSSQSQTSTASRKASSSVGKWQDRYGRAESPDLRRLPGAIDVIGQTITISRVEGRRRANENSNIQVLSDRSATEVDNNFSKPPPFFPPGAPPTHLPPPPFLPPPPTVSTAPPLIPPPGIPITVPPPGFPPPPGAPPPSLIPTIESGHSSGYDSRSARAFPYGNVAFPHLTSSAPSWPSLVDTTKQWDYYARREKDRDRDRERDRDRERERDRDRERERTRERERERDHSPTPSVFNSDEERYRYREYAERGYERHRASREKEERHRERRHREKEETRHKSSRSNSRRRHESEEGDSHRRHKHKKSKRSKEGKEAGSEPVPEQESTEAAPAE</sequence>
<feature type="chain" id="PRO_0000215038" description="Pre-mRNA 3'-end-processing factor FIP1">
    <location>
        <begin position="1"/>
        <end position="581"/>
    </location>
</feature>
<feature type="region of interest" description="Necessary for stimulating PAPOLA activity" evidence="1">
    <location>
        <begin position="1"/>
        <end position="332"/>
    </location>
</feature>
<feature type="region of interest" description="Sufficient for interaction with PAPOLA" evidence="1">
    <location>
        <begin position="1"/>
        <end position="110"/>
    </location>
</feature>
<feature type="region of interest" description="Disordered" evidence="3">
    <location>
        <begin position="1"/>
        <end position="95"/>
    </location>
</feature>
<feature type="region of interest" description="Sufficient for interaction with CPSF4" evidence="1">
    <location>
        <begin position="136"/>
        <end position="219"/>
    </location>
</feature>
<feature type="region of interest" description="Disordered" evidence="3">
    <location>
        <begin position="211"/>
        <end position="282"/>
    </location>
</feature>
<feature type="region of interest" description="Disordered" evidence="3">
    <location>
        <begin position="320"/>
        <end position="581"/>
    </location>
</feature>
<feature type="region of interest" description="Sufficient for interaction with CPSF1 and CSTF3" evidence="1">
    <location>
        <begin position="428"/>
        <end position="581"/>
    </location>
</feature>
<feature type="region of interest" description="Arg/Asp/Glu-rich domain" evidence="2">
    <location>
        <begin position="442"/>
        <end position="477"/>
    </location>
</feature>
<feature type="region of interest" description="Sufficient for interaction with AHCYL1" evidence="4">
    <location>
        <begin position="478"/>
        <end position="535"/>
    </location>
</feature>
<feature type="compositionally biased region" description="Basic and acidic residues" evidence="3">
    <location>
        <begin position="1"/>
        <end position="10"/>
    </location>
</feature>
<feature type="compositionally biased region" description="Basic and acidic residues" evidence="3">
    <location>
        <begin position="32"/>
        <end position="42"/>
    </location>
</feature>
<feature type="compositionally biased region" description="Acidic residues" evidence="3">
    <location>
        <begin position="43"/>
        <end position="54"/>
    </location>
</feature>
<feature type="compositionally biased region" description="Acidic residues" evidence="3">
    <location>
        <begin position="80"/>
        <end position="94"/>
    </location>
</feature>
<feature type="compositionally biased region" description="Low complexity" evidence="3">
    <location>
        <begin position="247"/>
        <end position="267"/>
    </location>
</feature>
<feature type="compositionally biased region" description="Basic and acidic residues" evidence="3">
    <location>
        <begin position="271"/>
        <end position="282"/>
    </location>
</feature>
<feature type="compositionally biased region" description="Polar residues" evidence="3">
    <location>
        <begin position="320"/>
        <end position="330"/>
    </location>
</feature>
<feature type="compositionally biased region" description="Pro residues" evidence="3">
    <location>
        <begin position="331"/>
        <end position="389"/>
    </location>
</feature>
<feature type="compositionally biased region" description="Polar residues" evidence="3">
    <location>
        <begin position="419"/>
        <end position="435"/>
    </location>
</feature>
<feature type="compositionally biased region" description="Basic and acidic residues" evidence="3">
    <location>
        <begin position="439"/>
        <end position="479"/>
    </location>
</feature>
<feature type="compositionally biased region" description="Basic and acidic residues" evidence="3">
    <location>
        <begin position="488"/>
        <end position="515"/>
    </location>
</feature>
<feature type="compositionally biased region" description="Basic residues" evidence="3">
    <location>
        <begin position="529"/>
        <end position="538"/>
    </location>
</feature>
<feature type="compositionally biased region" description="Basic residues" evidence="3">
    <location>
        <begin position="547"/>
        <end position="557"/>
    </location>
</feature>
<feature type="modified residue" description="Phosphoserine" evidence="10">
    <location>
        <position position="84"/>
    </location>
</feature>
<feature type="modified residue" description="Phosphoserine" evidence="10">
    <location>
        <position position="86"/>
    </location>
</feature>
<feature type="modified residue" description="Phosphoserine" evidence="10">
    <location>
        <position position="88"/>
    </location>
</feature>
<feature type="modified residue" description="Phosphoserine" evidence="9">
    <location>
        <position position="280"/>
    </location>
</feature>
<feature type="modified residue" description="Phosphotyrosine" evidence="2">
    <location>
        <position position="411"/>
    </location>
</feature>
<feature type="modified residue" description="Phosphoserine" evidence="8 9 10">
    <location>
        <position position="479"/>
    </location>
</feature>
<feature type="modified residue" description="Phosphothreonine" evidence="8 10">
    <location>
        <position position="481"/>
    </location>
</feature>
<feature type="modified residue" description="Phosphoserine" evidence="8 10">
    <location>
        <position position="483"/>
    </location>
</feature>
<feature type="modified residue" description="Phosphoserine" evidence="8 10">
    <location>
        <position position="487"/>
    </location>
</feature>
<feature type="modified residue" description="Phosphoserine" evidence="2">
    <location>
        <position position="541"/>
    </location>
</feature>
<feature type="splice variant" id="VSP_016733" description="In isoform 4." evidence="5">
    <original>T</original>
    <variation>TAEDCTMEVTPGAEIQDGRFNLFK</variation>
    <location>
        <position position="211"/>
    </location>
</feature>
<feature type="splice variant" id="VSP_016734" description="In isoform 2 and isoform 3." evidence="6">
    <location>
        <begin position="248"/>
        <end position="283"/>
    </location>
</feature>
<feature type="splice variant" id="VSP_016735" description="In isoform 3 and isoform 4." evidence="5 6">
    <location>
        <begin position="365"/>
        <end position="373"/>
    </location>
</feature>
<feature type="splice variant" id="VSP_016736" description="In isoform 4." evidence="5">
    <original>SDEERYRYREYAERGYERHRASREKEERHRERRHREKEETRHKSSRSNSRRRHESEEGDSHRRHKHKKSKRSKEGKEAGSEPVPEQESTEAAPAE</original>
    <variation>RFVGCAGP</variation>
    <location>
        <begin position="487"/>
        <end position="581"/>
    </location>
</feature>
<proteinExistence type="evidence at protein level"/>
<protein>
    <recommendedName>
        <fullName>Pre-mRNA 3'-end-processing factor FIP1</fullName>
    </recommendedName>
    <alternativeName>
        <fullName>FIP1-like 1 protein</fullName>
    </alternativeName>
</protein>
<reference key="1">
    <citation type="journal article" date="2005" name="Science">
        <title>The transcriptional landscape of the mammalian genome.</title>
        <authorList>
            <person name="Carninci P."/>
            <person name="Kasukawa T."/>
            <person name="Katayama S."/>
            <person name="Gough J."/>
            <person name="Frith M.C."/>
            <person name="Maeda N."/>
            <person name="Oyama R."/>
            <person name="Ravasi T."/>
            <person name="Lenhard B."/>
            <person name="Wells C."/>
            <person name="Kodzius R."/>
            <person name="Shimokawa K."/>
            <person name="Bajic V.B."/>
            <person name="Brenner S.E."/>
            <person name="Batalov S."/>
            <person name="Forrest A.R."/>
            <person name="Zavolan M."/>
            <person name="Davis M.J."/>
            <person name="Wilming L.G."/>
            <person name="Aidinis V."/>
            <person name="Allen J.E."/>
            <person name="Ambesi-Impiombato A."/>
            <person name="Apweiler R."/>
            <person name="Aturaliya R.N."/>
            <person name="Bailey T.L."/>
            <person name="Bansal M."/>
            <person name="Baxter L."/>
            <person name="Beisel K.W."/>
            <person name="Bersano T."/>
            <person name="Bono H."/>
            <person name="Chalk A.M."/>
            <person name="Chiu K.P."/>
            <person name="Choudhary V."/>
            <person name="Christoffels A."/>
            <person name="Clutterbuck D.R."/>
            <person name="Crowe M.L."/>
            <person name="Dalla E."/>
            <person name="Dalrymple B.P."/>
            <person name="de Bono B."/>
            <person name="Della Gatta G."/>
            <person name="di Bernardo D."/>
            <person name="Down T."/>
            <person name="Engstrom P."/>
            <person name="Fagiolini M."/>
            <person name="Faulkner G."/>
            <person name="Fletcher C.F."/>
            <person name="Fukushima T."/>
            <person name="Furuno M."/>
            <person name="Futaki S."/>
            <person name="Gariboldi M."/>
            <person name="Georgii-Hemming P."/>
            <person name="Gingeras T.R."/>
            <person name="Gojobori T."/>
            <person name="Green R.E."/>
            <person name="Gustincich S."/>
            <person name="Harbers M."/>
            <person name="Hayashi Y."/>
            <person name="Hensch T.K."/>
            <person name="Hirokawa N."/>
            <person name="Hill D."/>
            <person name="Huminiecki L."/>
            <person name="Iacono M."/>
            <person name="Ikeo K."/>
            <person name="Iwama A."/>
            <person name="Ishikawa T."/>
            <person name="Jakt M."/>
            <person name="Kanapin A."/>
            <person name="Katoh M."/>
            <person name="Kawasawa Y."/>
            <person name="Kelso J."/>
            <person name="Kitamura H."/>
            <person name="Kitano H."/>
            <person name="Kollias G."/>
            <person name="Krishnan S.P."/>
            <person name="Kruger A."/>
            <person name="Kummerfeld S.K."/>
            <person name="Kurochkin I.V."/>
            <person name="Lareau L.F."/>
            <person name="Lazarevic D."/>
            <person name="Lipovich L."/>
            <person name="Liu J."/>
            <person name="Liuni S."/>
            <person name="McWilliam S."/>
            <person name="Madan Babu M."/>
            <person name="Madera M."/>
            <person name="Marchionni L."/>
            <person name="Matsuda H."/>
            <person name="Matsuzawa S."/>
            <person name="Miki H."/>
            <person name="Mignone F."/>
            <person name="Miyake S."/>
            <person name="Morris K."/>
            <person name="Mottagui-Tabar S."/>
            <person name="Mulder N."/>
            <person name="Nakano N."/>
            <person name="Nakauchi H."/>
            <person name="Ng P."/>
            <person name="Nilsson R."/>
            <person name="Nishiguchi S."/>
            <person name="Nishikawa S."/>
            <person name="Nori F."/>
            <person name="Ohara O."/>
            <person name="Okazaki Y."/>
            <person name="Orlando V."/>
            <person name="Pang K.C."/>
            <person name="Pavan W.J."/>
            <person name="Pavesi G."/>
            <person name="Pesole G."/>
            <person name="Petrovsky N."/>
            <person name="Piazza S."/>
            <person name="Reed J."/>
            <person name="Reid J.F."/>
            <person name="Ring B.Z."/>
            <person name="Ringwald M."/>
            <person name="Rost B."/>
            <person name="Ruan Y."/>
            <person name="Salzberg S.L."/>
            <person name="Sandelin A."/>
            <person name="Schneider C."/>
            <person name="Schoenbach C."/>
            <person name="Sekiguchi K."/>
            <person name="Semple C.A."/>
            <person name="Seno S."/>
            <person name="Sessa L."/>
            <person name="Sheng Y."/>
            <person name="Shibata Y."/>
            <person name="Shimada H."/>
            <person name="Shimada K."/>
            <person name="Silva D."/>
            <person name="Sinclair B."/>
            <person name="Sperling S."/>
            <person name="Stupka E."/>
            <person name="Sugiura K."/>
            <person name="Sultana R."/>
            <person name="Takenaka Y."/>
            <person name="Taki K."/>
            <person name="Tammoja K."/>
            <person name="Tan S.L."/>
            <person name="Tang S."/>
            <person name="Taylor M.S."/>
            <person name="Tegner J."/>
            <person name="Teichmann S.A."/>
            <person name="Ueda H.R."/>
            <person name="van Nimwegen E."/>
            <person name="Verardo R."/>
            <person name="Wei C.L."/>
            <person name="Yagi K."/>
            <person name="Yamanishi H."/>
            <person name="Zabarovsky E."/>
            <person name="Zhu S."/>
            <person name="Zimmer A."/>
            <person name="Hide W."/>
            <person name="Bult C."/>
            <person name="Grimmond S.M."/>
            <person name="Teasdale R.D."/>
            <person name="Liu E.T."/>
            <person name="Brusic V."/>
            <person name="Quackenbush J."/>
            <person name="Wahlestedt C."/>
            <person name="Mattick J.S."/>
            <person name="Hume D.A."/>
            <person name="Kai C."/>
            <person name="Sasaki D."/>
            <person name="Tomaru Y."/>
            <person name="Fukuda S."/>
            <person name="Kanamori-Katayama M."/>
            <person name="Suzuki M."/>
            <person name="Aoki J."/>
            <person name="Arakawa T."/>
            <person name="Iida J."/>
            <person name="Imamura K."/>
            <person name="Itoh M."/>
            <person name="Kato T."/>
            <person name="Kawaji H."/>
            <person name="Kawagashira N."/>
            <person name="Kawashima T."/>
            <person name="Kojima M."/>
            <person name="Kondo S."/>
            <person name="Konno H."/>
            <person name="Nakano K."/>
            <person name="Ninomiya N."/>
            <person name="Nishio T."/>
            <person name="Okada M."/>
            <person name="Plessy C."/>
            <person name="Shibata K."/>
            <person name="Shiraki T."/>
            <person name="Suzuki S."/>
            <person name="Tagami M."/>
            <person name="Waki K."/>
            <person name="Watahiki A."/>
            <person name="Okamura-Oho Y."/>
            <person name="Suzuki H."/>
            <person name="Kawai J."/>
            <person name="Hayashizaki Y."/>
        </authorList>
    </citation>
    <scope>NUCLEOTIDE SEQUENCE [LARGE SCALE MRNA] (ISOFORMS 1 AND 2)</scope>
    <scope>NUCLEOTIDE SEQUENCE [LARGE SCALE MRNA] OF 1-558 (ISOFORM 3)</scope>
    <source>
        <strain>C57BL/6J</strain>
        <tissue>Embryonic spinal cord</tissue>
        <tissue>Liver</tissue>
        <tissue>Small intestine</tissue>
    </source>
</reference>
<reference key="2">
    <citation type="journal article" date="2004" name="Genome Res.">
        <title>The status, quality, and expansion of the NIH full-length cDNA project: the Mammalian Gene Collection (MGC).</title>
        <authorList>
            <consortium name="The MGC Project Team"/>
        </authorList>
    </citation>
    <scope>NUCLEOTIDE SEQUENCE [LARGE SCALE MRNA] (ISOFORM 4)</scope>
    <source>
        <strain>FVB/N</strain>
        <tissue>Mammary gland</tissue>
    </source>
</reference>
<reference key="3">
    <citation type="journal article" date="2007" name="Proc. Natl. Acad. Sci. U.S.A.">
        <title>Large-scale phosphorylation analysis of mouse liver.</title>
        <authorList>
            <person name="Villen J."/>
            <person name="Beausoleil S.A."/>
            <person name="Gerber S.A."/>
            <person name="Gygi S.P."/>
        </authorList>
    </citation>
    <scope>PHOSPHORYLATION [LARGE SCALE ANALYSIS] AT SER-479; THR-481; SER-483 AND SER-487</scope>
    <scope>IDENTIFICATION BY MASS SPECTROMETRY [LARGE SCALE ANALYSIS]</scope>
    <source>
        <tissue>Liver</tissue>
    </source>
</reference>
<reference key="4">
    <citation type="journal article" date="2009" name="Immunity">
        <title>The phagosomal proteome in interferon-gamma-activated macrophages.</title>
        <authorList>
            <person name="Trost M."/>
            <person name="English L."/>
            <person name="Lemieux S."/>
            <person name="Courcelles M."/>
            <person name="Desjardins M."/>
            <person name="Thibault P."/>
        </authorList>
    </citation>
    <scope>PHOSPHORYLATION [LARGE SCALE ANALYSIS] AT SER-280 AND SER-479</scope>
    <scope>IDENTIFICATION BY MASS SPECTROMETRY [LARGE SCALE ANALYSIS]</scope>
</reference>
<reference key="5">
    <citation type="journal article" date="2009" name="J. Biol. Chem.">
        <title>Inositol 1,4,5-triphosphate receptor-binding protein released with inositol 1,4,5-triphosphate (IRBIT) associates with components of the mRNA 3' processing machinery in a phosphorylation-dependent manner and inhibits polyadenylation.</title>
        <authorList>
            <person name="Kiefer H."/>
            <person name="Mizutani A."/>
            <person name="Iemura S."/>
            <person name="Natsume T."/>
            <person name="Ando H."/>
            <person name="Kuroda Y."/>
            <person name="Mikoshiba K."/>
        </authorList>
    </citation>
    <scope>INTERACTION WITH AHCYL1 AND PAPOLA</scope>
</reference>
<reference key="6">
    <citation type="journal article" date="2010" name="Cell">
        <title>A tissue-specific atlas of mouse protein phosphorylation and expression.</title>
        <authorList>
            <person name="Huttlin E.L."/>
            <person name="Jedrychowski M.P."/>
            <person name="Elias J.E."/>
            <person name="Goswami T."/>
            <person name="Rad R."/>
            <person name="Beausoleil S.A."/>
            <person name="Villen J."/>
            <person name="Haas W."/>
            <person name="Sowa M.E."/>
            <person name="Gygi S.P."/>
        </authorList>
    </citation>
    <scope>PHOSPHORYLATION [LARGE SCALE ANALYSIS] AT SER-84; SER-86; SER-88; SER-479; THR-481; SER-483 AND SER-487</scope>
    <scope>IDENTIFICATION BY MASS SPECTROMETRY [LARGE SCALE ANALYSIS]</scope>
    <source>
        <tissue>Brain</tissue>
        <tissue>Heart</tissue>
        <tissue>Kidney</tissue>
        <tissue>Lung</tissue>
        <tissue>Pancreas</tissue>
        <tissue>Spleen</tissue>
        <tissue>Testis</tissue>
    </source>
</reference>
<organism>
    <name type="scientific">Mus musculus</name>
    <name type="common">Mouse</name>
    <dbReference type="NCBI Taxonomy" id="10090"/>
    <lineage>
        <taxon>Eukaryota</taxon>
        <taxon>Metazoa</taxon>
        <taxon>Chordata</taxon>
        <taxon>Craniata</taxon>
        <taxon>Vertebrata</taxon>
        <taxon>Euteleostomi</taxon>
        <taxon>Mammalia</taxon>
        <taxon>Eutheria</taxon>
        <taxon>Euarchontoglires</taxon>
        <taxon>Glires</taxon>
        <taxon>Rodentia</taxon>
        <taxon>Myomorpha</taxon>
        <taxon>Muroidea</taxon>
        <taxon>Muridae</taxon>
        <taxon>Murinae</taxon>
        <taxon>Mus</taxon>
        <taxon>Mus</taxon>
    </lineage>
</organism>
<evidence type="ECO:0000250" key="1"/>
<evidence type="ECO:0000250" key="2">
    <source>
        <dbReference type="UniProtKB" id="Q6UN15"/>
    </source>
</evidence>
<evidence type="ECO:0000256" key="3">
    <source>
        <dbReference type="SAM" id="MobiDB-lite"/>
    </source>
</evidence>
<evidence type="ECO:0000269" key="4">
    <source>
    </source>
</evidence>
<evidence type="ECO:0000303" key="5">
    <source>
    </source>
</evidence>
<evidence type="ECO:0000303" key="6">
    <source>
    </source>
</evidence>
<evidence type="ECO:0000305" key="7"/>
<evidence type="ECO:0007744" key="8">
    <source>
    </source>
</evidence>
<evidence type="ECO:0007744" key="9">
    <source>
    </source>
</evidence>
<evidence type="ECO:0007744" key="10">
    <source>
    </source>
</evidence>
<comment type="function">
    <text evidence="1">Component of the cleavage and polyadenylation specificity factor (CPSF) complex that plays a key role in pre-mRNA 3'-end formation, recognizing the AAUAAA signal sequence and interacting with poly(A) polymerase and other factors to bring about cleavage and poly(A) addition. FIP1L1 contributes to poly(A) site recognition and stimulates poly(A) addition. Binds to U-rich RNA sequence elements surrounding the poly(A) site. May act to tether poly(A) polymerase to the CPSF complex (By similarity).</text>
</comment>
<comment type="subunit">
    <text evidence="2 4">Component of the cleavage and polyadenylation specificity factor (CPSF) complex, composed of CPSF1, CPSF2, CPSF3, CPSF4 and FIP1L1. Found in a complex with CPSF1, FIP1L1 and PAPOLA. Interacts with CPSF1, CPSF4, CSTF2 and CSTF3 (By similarity). Interacts with AHCYL1 (when phosphorylated); the interaction is direct and associates AHCYL1 with the CPSF complex and RNA (PubMed:19224921). Interacts with PAPOLA; the interaction seems to be increased by the interaction with AHCYL1 (PubMed:19224921). Interacts with NUDT21/CPSF5; this interaction occurs in a RNA sequence-specific manner. Interacts (preferentially via unphosphorylated form and Arg/Glu/Asp-rich domain) with CPSF6 (via Arg/Ser-rich domain); this interaction mediates, at least in part, the interaction between the CFIm and CPSF complexes and may be inhibited by CPSF6 hyper-phosphorylation. Interacts (preferentially via unphosphorylated form and Arg/Asp/Glu-rich domain) with CPSF7 (via Arg/Ser-rich domain); this interaction mediates, at least in part, the interaction between the CFIm and CPSF complexes and may be inhibited by CPSF7 hyper-phosphorylation (By similarity).</text>
</comment>
<comment type="subcellular location">
    <subcellularLocation>
        <location evidence="1">Nucleus</location>
    </subcellularLocation>
</comment>
<comment type="alternative products">
    <event type="alternative splicing"/>
    <isoform>
        <id>Q9D824-1</id>
        <name>1</name>
        <sequence type="displayed"/>
    </isoform>
    <isoform>
        <id>Q9D824-2</id>
        <name>2</name>
        <sequence type="described" ref="VSP_016734"/>
    </isoform>
    <isoform>
        <id>Q9D824-3</id>
        <name>3</name>
        <sequence type="described" ref="VSP_016734 VSP_016735"/>
    </isoform>
    <isoform>
        <id>Q9D824-4</id>
        <name>4</name>
        <sequence type="described" ref="VSP_016733 VSP_016735 VSP_016736"/>
    </isoform>
</comment>
<comment type="similarity">
    <text evidence="7">Belongs to the FIP1 family.</text>
</comment>
<dbReference type="EMBL" id="AK005061">
    <property type="protein sequence ID" value="BAB23785.1"/>
    <property type="molecule type" value="mRNA"/>
</dbReference>
<dbReference type="EMBL" id="AK008561">
    <property type="protein sequence ID" value="BAB25745.1"/>
    <property type="molecule type" value="mRNA"/>
</dbReference>
<dbReference type="EMBL" id="AK049672">
    <property type="protein sequence ID" value="BAC33867.1"/>
    <property type="molecule type" value="mRNA"/>
</dbReference>
<dbReference type="EMBL" id="AK164105">
    <property type="protein sequence ID" value="BAE37629.1"/>
    <property type="molecule type" value="mRNA"/>
</dbReference>
<dbReference type="EMBL" id="BC003263">
    <property type="protein sequence ID" value="AAH03263.1"/>
    <property type="molecule type" value="mRNA"/>
</dbReference>
<dbReference type="CCDS" id="CCDS19346.1">
    <molecule id="Q9D824-2"/>
</dbReference>
<dbReference type="CCDS" id="CCDS51520.1">
    <molecule id="Q9D824-1"/>
</dbReference>
<dbReference type="CCDS" id="CCDS51521.1">
    <molecule id="Q9D824-3"/>
</dbReference>
<dbReference type="RefSeq" id="NP_001153045.1">
    <molecule id="Q9D824-1"/>
    <property type="nucleotide sequence ID" value="NM_001159573.2"/>
</dbReference>
<dbReference type="RefSeq" id="NP_001153046.1">
    <molecule id="Q9D824-3"/>
    <property type="nucleotide sequence ID" value="NM_001159574.2"/>
</dbReference>
<dbReference type="RefSeq" id="NP_077145.2">
    <molecule id="Q9D824-2"/>
    <property type="nucleotide sequence ID" value="NM_024183.5"/>
</dbReference>
<dbReference type="SMR" id="Q9D824"/>
<dbReference type="BioGRID" id="211797">
    <property type="interactions" value="14"/>
</dbReference>
<dbReference type="FunCoup" id="Q9D824">
    <property type="interactions" value="4918"/>
</dbReference>
<dbReference type="IntAct" id="Q9D824">
    <property type="interactions" value="3"/>
</dbReference>
<dbReference type="STRING" id="10090.ENSMUSP00000109164"/>
<dbReference type="GlyGen" id="Q9D824">
    <property type="glycosylation" value="7 sites, 1 O-linked glycan (6 sites)"/>
</dbReference>
<dbReference type="iPTMnet" id="Q9D824"/>
<dbReference type="PhosphoSitePlus" id="Q9D824"/>
<dbReference type="jPOST" id="Q9D824"/>
<dbReference type="PaxDb" id="10090-ENSMUSP00000109164"/>
<dbReference type="PeptideAtlas" id="Q9D824"/>
<dbReference type="ProteomicsDB" id="271765">
    <molecule id="Q9D824-1"/>
</dbReference>
<dbReference type="ProteomicsDB" id="271766">
    <molecule id="Q9D824-2"/>
</dbReference>
<dbReference type="ProteomicsDB" id="271767">
    <molecule id="Q9D824-3"/>
</dbReference>
<dbReference type="ProteomicsDB" id="271768">
    <molecule id="Q9D824-4"/>
</dbReference>
<dbReference type="Pumba" id="Q9D824"/>
<dbReference type="DNASU" id="66899"/>
<dbReference type="Ensembl" id="ENSMUST00000080164.12">
    <molecule id="Q9D824-2"/>
    <property type="protein sequence ID" value="ENSMUSP00000079059.6"/>
    <property type="gene ID" value="ENSMUSG00000029227.16"/>
</dbReference>
<dbReference type="Ensembl" id="ENSMUST00000113534.9">
    <molecule id="Q9D824-4"/>
    <property type="protein sequence ID" value="ENSMUSP00000109162.3"/>
    <property type="gene ID" value="ENSMUSG00000029227.16"/>
</dbReference>
<dbReference type="Ensembl" id="ENSMUST00000113535.9">
    <molecule id="Q9D824-3"/>
    <property type="protein sequence ID" value="ENSMUSP00000109163.3"/>
    <property type="gene ID" value="ENSMUSG00000029227.16"/>
</dbReference>
<dbReference type="Ensembl" id="ENSMUST00000113536.8">
    <molecule id="Q9D824-1"/>
    <property type="protein sequence ID" value="ENSMUSP00000109164.2"/>
    <property type="gene ID" value="ENSMUSG00000029227.16"/>
</dbReference>
<dbReference type="GeneID" id="66899"/>
<dbReference type="KEGG" id="mmu:66899"/>
<dbReference type="UCSC" id="uc008xtm.2">
    <molecule id="Q9D824-4"/>
    <property type="organism name" value="mouse"/>
</dbReference>
<dbReference type="UCSC" id="uc008xtn.2">
    <molecule id="Q9D824-2"/>
    <property type="organism name" value="mouse"/>
</dbReference>
<dbReference type="UCSC" id="uc008xto.2">
    <molecule id="Q9D824-1"/>
    <property type="organism name" value="mouse"/>
</dbReference>
<dbReference type="UCSC" id="uc008xtp.2">
    <molecule id="Q9D824-3"/>
    <property type="organism name" value="mouse"/>
</dbReference>
<dbReference type="AGR" id="MGI:1914149"/>
<dbReference type="CTD" id="81608"/>
<dbReference type="MGI" id="MGI:1914149">
    <property type="gene designation" value="Fip1l1"/>
</dbReference>
<dbReference type="VEuPathDB" id="HostDB:ENSMUSG00000029227"/>
<dbReference type="eggNOG" id="KOG1049">
    <property type="taxonomic scope" value="Eukaryota"/>
</dbReference>
<dbReference type="GeneTree" id="ENSGT00940000162578"/>
<dbReference type="HOGENOM" id="CLU_035577_1_0_1"/>
<dbReference type="InParanoid" id="Q9D824"/>
<dbReference type="OMA" id="PQMRMGM"/>
<dbReference type="OrthoDB" id="1917198at2759"/>
<dbReference type="PhylomeDB" id="Q9D824"/>
<dbReference type="TreeFam" id="TF318610"/>
<dbReference type="Reactome" id="R-MMU-159231">
    <property type="pathway name" value="Transport of Mature mRNA Derived from an Intronless Transcript"/>
</dbReference>
<dbReference type="Reactome" id="R-MMU-72187">
    <property type="pathway name" value="mRNA 3'-end processing"/>
</dbReference>
<dbReference type="Reactome" id="R-MMU-72203">
    <property type="pathway name" value="Processing of Capped Intron-Containing Pre-mRNA"/>
</dbReference>
<dbReference type="Reactome" id="R-MMU-73856">
    <property type="pathway name" value="RNA Polymerase II Transcription Termination"/>
</dbReference>
<dbReference type="Reactome" id="R-MMU-77595">
    <property type="pathway name" value="Processing of Intronless Pre-mRNAs"/>
</dbReference>
<dbReference type="BioGRID-ORCS" id="66899">
    <property type="hits" value="16 hits in 81 CRISPR screens"/>
</dbReference>
<dbReference type="ChiTaRS" id="Fip1l1">
    <property type="organism name" value="mouse"/>
</dbReference>
<dbReference type="PRO" id="PR:Q9D824"/>
<dbReference type="Proteomes" id="UP000000589">
    <property type="component" value="Chromosome 5"/>
</dbReference>
<dbReference type="RNAct" id="Q9D824">
    <property type="molecule type" value="protein"/>
</dbReference>
<dbReference type="Bgee" id="ENSMUSG00000029227">
    <property type="expression patterns" value="Expressed in primary oocyte and 264 other cell types or tissues"/>
</dbReference>
<dbReference type="ExpressionAtlas" id="Q9D824">
    <property type="expression patterns" value="baseline and differential"/>
</dbReference>
<dbReference type="GO" id="GO:0005847">
    <property type="term" value="C:mRNA cleavage and polyadenylation specificity factor complex"/>
    <property type="evidence" value="ECO:0000314"/>
    <property type="project" value="MGI"/>
</dbReference>
<dbReference type="GO" id="GO:0005634">
    <property type="term" value="C:nucleus"/>
    <property type="evidence" value="ECO:0000314"/>
    <property type="project" value="MGI"/>
</dbReference>
<dbReference type="GO" id="GO:0030234">
    <property type="term" value="F:enzyme regulator activity"/>
    <property type="evidence" value="ECO:0000305"/>
    <property type="project" value="MGI"/>
</dbReference>
<dbReference type="GO" id="GO:0003723">
    <property type="term" value="F:RNA binding"/>
    <property type="evidence" value="ECO:0007669"/>
    <property type="project" value="UniProtKB-KW"/>
</dbReference>
<dbReference type="GO" id="GO:0006397">
    <property type="term" value="P:mRNA processing"/>
    <property type="evidence" value="ECO:0007669"/>
    <property type="project" value="UniProtKB-KW"/>
</dbReference>
<dbReference type="GO" id="GO:0031440">
    <property type="term" value="P:regulation of mRNA 3'-end processing"/>
    <property type="evidence" value="ECO:0000305"/>
    <property type="project" value="MGI"/>
</dbReference>
<dbReference type="InterPro" id="IPR007854">
    <property type="entry name" value="Fip1_dom"/>
</dbReference>
<dbReference type="InterPro" id="IPR051187">
    <property type="entry name" value="Pre-mRNA_3'-end_processing_reg"/>
</dbReference>
<dbReference type="PANTHER" id="PTHR13484">
    <property type="entry name" value="FIP1-LIKE 1 PROTEIN"/>
    <property type="match status" value="1"/>
</dbReference>
<dbReference type="PANTHER" id="PTHR13484:SF9">
    <property type="entry name" value="PRE-MRNA 3'-END-PROCESSING FACTOR FIP1"/>
    <property type="match status" value="1"/>
</dbReference>
<dbReference type="Pfam" id="PF05182">
    <property type="entry name" value="Fip1"/>
    <property type="match status" value="1"/>
</dbReference>
<name>FIP1_MOUSE</name>
<gene>
    <name type="primary">Fip1l1</name>
</gene>
<accession>Q9D824</accession>
<accession>Q8BWX7</accession>
<accession>Q99LH0</accession>
<accession>Q9DBB2</accession>